<accession>Q97EZ4</accession>
<keyword id="KW-0119">Carbohydrate metabolism</keyword>
<keyword id="KW-0963">Cytoplasm</keyword>
<keyword id="KW-0299">Galactose metabolism</keyword>
<keyword id="KW-0548">Nucleotidyltransferase</keyword>
<keyword id="KW-1185">Reference proteome</keyword>
<keyword id="KW-0808">Transferase</keyword>
<organism>
    <name type="scientific">Clostridium acetobutylicum (strain ATCC 824 / DSM 792 / JCM 1419 / IAM 19013 / LMG 5710 / NBRC 13948 / NRRL B-527 / VKM B-1787 / 2291 / W)</name>
    <dbReference type="NCBI Taxonomy" id="272562"/>
    <lineage>
        <taxon>Bacteria</taxon>
        <taxon>Bacillati</taxon>
        <taxon>Bacillota</taxon>
        <taxon>Clostridia</taxon>
        <taxon>Eubacteriales</taxon>
        <taxon>Clostridiaceae</taxon>
        <taxon>Clostridium</taxon>
    </lineage>
</organism>
<comment type="catalytic activity">
    <reaction evidence="1">
        <text>alpha-D-galactose 1-phosphate + UDP-alpha-D-glucose = alpha-D-glucose 1-phosphate + UDP-alpha-D-galactose</text>
        <dbReference type="Rhea" id="RHEA:13989"/>
        <dbReference type="ChEBI" id="CHEBI:58336"/>
        <dbReference type="ChEBI" id="CHEBI:58601"/>
        <dbReference type="ChEBI" id="CHEBI:58885"/>
        <dbReference type="ChEBI" id="CHEBI:66914"/>
        <dbReference type="EC" id="2.7.7.12"/>
    </reaction>
</comment>
<comment type="pathway">
    <text evidence="1">Carbohydrate metabolism; galactose metabolism.</text>
</comment>
<comment type="subcellular location">
    <subcellularLocation>
        <location evidence="1">Cytoplasm</location>
    </subcellularLocation>
</comment>
<comment type="similarity">
    <text evidence="1">Belongs to the galactose-1-phosphate uridylyltransferase type 2 family.</text>
</comment>
<evidence type="ECO:0000255" key="1">
    <source>
        <dbReference type="HAMAP-Rule" id="MF_00571"/>
    </source>
</evidence>
<reference key="1">
    <citation type="journal article" date="2001" name="J. Bacteriol.">
        <title>Genome sequence and comparative analysis of the solvent-producing bacterium Clostridium acetobutylicum.</title>
        <authorList>
            <person name="Noelling J."/>
            <person name="Breton G."/>
            <person name="Omelchenko M.V."/>
            <person name="Makarova K.S."/>
            <person name="Zeng Q."/>
            <person name="Gibson R."/>
            <person name="Lee H.M."/>
            <person name="Dubois J."/>
            <person name="Qiu D."/>
            <person name="Hitti J."/>
            <person name="Wolf Y.I."/>
            <person name="Tatusov R.L."/>
            <person name="Sabathe F."/>
            <person name="Doucette-Stamm L.A."/>
            <person name="Soucaille P."/>
            <person name="Daly M.J."/>
            <person name="Bennett G.N."/>
            <person name="Koonin E.V."/>
            <person name="Smith D.R."/>
        </authorList>
    </citation>
    <scope>NUCLEOTIDE SEQUENCE [LARGE SCALE GENOMIC DNA]</scope>
    <source>
        <strain>ATCC 824 / DSM 792 / JCM 1419 / IAM 19013 / LMG 5710 / NBRC 13948 / NRRL B-527 / VKM B-1787 / 2291 / W</strain>
    </source>
</reference>
<name>GALT_CLOAB</name>
<gene>
    <name evidence="1" type="primary">galT</name>
    <name type="ordered locus">CA_C2961</name>
</gene>
<proteinExistence type="inferred from homology"/>
<protein>
    <recommendedName>
        <fullName evidence="1">Galactose-1-phosphate uridylyltransferase</fullName>
        <shortName evidence="1">Gal-1-P uridylyltransferase</shortName>
        <ecNumber evidence="1">2.7.7.12</ecNumber>
    </recommendedName>
    <alternativeName>
        <fullName evidence="1">UDP-glucose--hexose-1-phosphate uridylyltransferase</fullName>
    </alternativeName>
</protein>
<dbReference type="EC" id="2.7.7.12" evidence="1"/>
<dbReference type="EMBL" id="AE001437">
    <property type="protein sequence ID" value="AAK80903.1"/>
    <property type="molecule type" value="Genomic_DNA"/>
</dbReference>
<dbReference type="PIR" id="D97264">
    <property type="entry name" value="D97264"/>
</dbReference>
<dbReference type="RefSeq" id="NP_349563.1">
    <property type="nucleotide sequence ID" value="NC_003030.1"/>
</dbReference>
<dbReference type="RefSeq" id="WP_010966244.1">
    <property type="nucleotide sequence ID" value="NC_003030.1"/>
</dbReference>
<dbReference type="STRING" id="272562.CA_C2961"/>
<dbReference type="GeneID" id="44999449"/>
<dbReference type="KEGG" id="cac:CA_C2961"/>
<dbReference type="PATRIC" id="fig|272562.8.peg.3145"/>
<dbReference type="eggNOG" id="COG4468">
    <property type="taxonomic scope" value="Bacteria"/>
</dbReference>
<dbReference type="HOGENOM" id="CLU_047799_0_0_9"/>
<dbReference type="OrthoDB" id="2293at2"/>
<dbReference type="UniPathway" id="UPA00214"/>
<dbReference type="Proteomes" id="UP000000814">
    <property type="component" value="Chromosome"/>
</dbReference>
<dbReference type="GO" id="GO:0005737">
    <property type="term" value="C:cytoplasm"/>
    <property type="evidence" value="ECO:0007669"/>
    <property type="project" value="UniProtKB-SubCell"/>
</dbReference>
<dbReference type="GO" id="GO:0008108">
    <property type="term" value="F:UDP-glucose:hexose-1-phosphate uridylyltransferase activity"/>
    <property type="evidence" value="ECO:0007669"/>
    <property type="project" value="UniProtKB-UniRule"/>
</dbReference>
<dbReference type="GO" id="GO:0006012">
    <property type="term" value="P:galactose metabolic process"/>
    <property type="evidence" value="ECO:0007669"/>
    <property type="project" value="UniProtKB-UniRule"/>
</dbReference>
<dbReference type="HAMAP" id="MF_00571">
    <property type="entry name" value="GalP_UDP_trans"/>
    <property type="match status" value="1"/>
</dbReference>
<dbReference type="InterPro" id="IPR000766">
    <property type="entry name" value="GalP_uridyl_Trfase_II"/>
</dbReference>
<dbReference type="InterPro" id="IPR023425">
    <property type="entry name" value="GalP_uridyl_Trfase_II_CS"/>
</dbReference>
<dbReference type="InterPro" id="IPR005850">
    <property type="entry name" value="GalP_Utransf_C"/>
</dbReference>
<dbReference type="InterPro" id="IPR005849">
    <property type="entry name" value="GalP_Utransf_N"/>
</dbReference>
<dbReference type="NCBIfam" id="TIGR01239">
    <property type="entry name" value="galT_2"/>
    <property type="match status" value="1"/>
</dbReference>
<dbReference type="NCBIfam" id="NF003629">
    <property type="entry name" value="PRK05270.1-2"/>
    <property type="match status" value="1"/>
</dbReference>
<dbReference type="PANTHER" id="PTHR39191:SF1">
    <property type="entry name" value="DUF4922 DOMAIN-CONTAINING PROTEIN"/>
    <property type="match status" value="1"/>
</dbReference>
<dbReference type="PANTHER" id="PTHR39191">
    <property type="entry name" value="GALACTOSE-1-PHOSPHATE URIDYLYLTRANSFERASE"/>
    <property type="match status" value="1"/>
</dbReference>
<dbReference type="Pfam" id="PF02744">
    <property type="entry name" value="GalP_UDP_tr_C"/>
    <property type="match status" value="1"/>
</dbReference>
<dbReference type="Pfam" id="PF01087">
    <property type="entry name" value="GalP_UDP_transf"/>
    <property type="match status" value="1"/>
</dbReference>
<dbReference type="PIRSF" id="PIRSF006005">
    <property type="entry name" value="GalT_BS"/>
    <property type="match status" value="1"/>
</dbReference>
<dbReference type="PROSITE" id="PS01163">
    <property type="entry name" value="GAL_P_UDP_TRANSF_II"/>
    <property type="match status" value="1"/>
</dbReference>
<feature type="chain" id="PRO_0000169902" description="Galactose-1-phosphate uridylyltransferase">
    <location>
        <begin position="1"/>
        <end position="497"/>
    </location>
</feature>
<sequence length="497" mass="57289">MINHEINKLLAFSLKKGLIQEDDKIYSSNMLAGLFNLDNFYFEEISDVPSTATAILNQLLAYAVKENLINDTVAERDLFDTKIMNCVMPRPSEVINNFNRLLNNSPKEATSYYYKLSIASNYIRKDRIDKNITWKTPTEYGDLDITINLSKPEKDPRDIAKAKLSKSTSYPKCLLCKENEGFYGNINHPARQTLRIIPLELNKSKWFLQYSPYTYYNEHCIILNNEHIPMKISRITFENLLSFIDILPHYFAGSNADLPIVGGSILSHDHYQGGRYTFAMEKAPVEKEYSIKGYEDISVGRVKWPMSVIRISSKNKTKLINLAEHILTSWRNYSDKTQSILSHTGSEPHNTITPIARKRNEEYELDLVLRNNRTDENYPLGIFHPHNEVHHIKKENIGLIEVMGLAVLPARLKSELALIKENLIEKKKDISNDSTISKHNTWYKYILDNYKNISEENIDCILKKEVGIKFLEVLKHAGVFKRNSSGLSAFDKFINIL</sequence>